<reference key="1">
    <citation type="journal article" date="2011" name="J. Bacteriol.">
        <title>Comparative genomics of 28 Salmonella enterica isolates: evidence for CRISPR-mediated adaptive sublineage evolution.</title>
        <authorList>
            <person name="Fricke W.F."/>
            <person name="Mammel M.K."/>
            <person name="McDermott P.F."/>
            <person name="Tartera C."/>
            <person name="White D.G."/>
            <person name="Leclerc J.E."/>
            <person name="Ravel J."/>
            <person name="Cebula T.A."/>
        </authorList>
    </citation>
    <scope>NUCLEOTIDE SEQUENCE [LARGE SCALE GENOMIC DNA]</scope>
    <source>
        <strain>CVM19633</strain>
    </source>
</reference>
<feature type="chain" id="PRO_1000115771" description="1-deoxy-D-xylulose-5-phosphate synthase">
    <location>
        <begin position="1"/>
        <end position="620"/>
    </location>
</feature>
<feature type="binding site" evidence="1">
    <location>
        <position position="80"/>
    </location>
    <ligand>
        <name>thiamine diphosphate</name>
        <dbReference type="ChEBI" id="CHEBI:58937"/>
    </ligand>
</feature>
<feature type="binding site" evidence="1">
    <location>
        <begin position="121"/>
        <end position="123"/>
    </location>
    <ligand>
        <name>thiamine diphosphate</name>
        <dbReference type="ChEBI" id="CHEBI:58937"/>
    </ligand>
</feature>
<feature type="binding site" evidence="1">
    <location>
        <position position="152"/>
    </location>
    <ligand>
        <name>Mg(2+)</name>
        <dbReference type="ChEBI" id="CHEBI:18420"/>
    </ligand>
</feature>
<feature type="binding site" evidence="1">
    <location>
        <begin position="153"/>
        <end position="154"/>
    </location>
    <ligand>
        <name>thiamine diphosphate</name>
        <dbReference type="ChEBI" id="CHEBI:58937"/>
    </ligand>
</feature>
<feature type="binding site" evidence="1">
    <location>
        <position position="181"/>
    </location>
    <ligand>
        <name>Mg(2+)</name>
        <dbReference type="ChEBI" id="CHEBI:18420"/>
    </ligand>
</feature>
<feature type="binding site" evidence="1">
    <location>
        <position position="181"/>
    </location>
    <ligand>
        <name>thiamine diphosphate</name>
        <dbReference type="ChEBI" id="CHEBI:58937"/>
    </ligand>
</feature>
<feature type="binding site" evidence="1">
    <location>
        <position position="288"/>
    </location>
    <ligand>
        <name>thiamine diphosphate</name>
        <dbReference type="ChEBI" id="CHEBI:58937"/>
    </ligand>
</feature>
<feature type="binding site" evidence="1">
    <location>
        <position position="370"/>
    </location>
    <ligand>
        <name>thiamine diphosphate</name>
        <dbReference type="ChEBI" id="CHEBI:58937"/>
    </ligand>
</feature>
<accession>B4TMA2</accession>
<protein>
    <recommendedName>
        <fullName evidence="1">1-deoxy-D-xylulose-5-phosphate synthase</fullName>
        <ecNumber evidence="1">2.2.1.7</ecNumber>
    </recommendedName>
    <alternativeName>
        <fullName evidence="1">1-deoxyxylulose-5-phosphate synthase</fullName>
        <shortName evidence="1">DXP synthase</shortName>
        <shortName evidence="1">DXPS</shortName>
    </alternativeName>
</protein>
<name>DXS_SALSV</name>
<organism>
    <name type="scientific">Salmonella schwarzengrund (strain CVM19633)</name>
    <dbReference type="NCBI Taxonomy" id="439843"/>
    <lineage>
        <taxon>Bacteria</taxon>
        <taxon>Pseudomonadati</taxon>
        <taxon>Pseudomonadota</taxon>
        <taxon>Gammaproteobacteria</taxon>
        <taxon>Enterobacterales</taxon>
        <taxon>Enterobacteriaceae</taxon>
        <taxon>Salmonella</taxon>
    </lineage>
</organism>
<evidence type="ECO:0000255" key="1">
    <source>
        <dbReference type="HAMAP-Rule" id="MF_00315"/>
    </source>
</evidence>
<gene>
    <name evidence="1" type="primary">dxs</name>
    <name type="ordered locus">SeSA_A0482</name>
</gene>
<proteinExistence type="inferred from homology"/>
<dbReference type="EC" id="2.2.1.7" evidence="1"/>
<dbReference type="EMBL" id="CP001127">
    <property type="protein sequence ID" value="ACF93019.1"/>
    <property type="molecule type" value="Genomic_DNA"/>
</dbReference>
<dbReference type="RefSeq" id="WP_000006777.1">
    <property type="nucleotide sequence ID" value="NC_011094.1"/>
</dbReference>
<dbReference type="SMR" id="B4TMA2"/>
<dbReference type="KEGG" id="sew:SeSA_A0482"/>
<dbReference type="HOGENOM" id="CLU_009227_1_4_6"/>
<dbReference type="UniPathway" id="UPA00064">
    <property type="reaction ID" value="UER00091"/>
</dbReference>
<dbReference type="Proteomes" id="UP000001865">
    <property type="component" value="Chromosome"/>
</dbReference>
<dbReference type="GO" id="GO:0005829">
    <property type="term" value="C:cytosol"/>
    <property type="evidence" value="ECO:0007669"/>
    <property type="project" value="TreeGrafter"/>
</dbReference>
<dbReference type="GO" id="GO:0008661">
    <property type="term" value="F:1-deoxy-D-xylulose-5-phosphate synthase activity"/>
    <property type="evidence" value="ECO:0007669"/>
    <property type="project" value="UniProtKB-UniRule"/>
</dbReference>
<dbReference type="GO" id="GO:0000287">
    <property type="term" value="F:magnesium ion binding"/>
    <property type="evidence" value="ECO:0007669"/>
    <property type="project" value="UniProtKB-UniRule"/>
</dbReference>
<dbReference type="GO" id="GO:0030976">
    <property type="term" value="F:thiamine pyrophosphate binding"/>
    <property type="evidence" value="ECO:0007669"/>
    <property type="project" value="UniProtKB-UniRule"/>
</dbReference>
<dbReference type="GO" id="GO:0052865">
    <property type="term" value="P:1-deoxy-D-xylulose 5-phosphate biosynthetic process"/>
    <property type="evidence" value="ECO:0007669"/>
    <property type="project" value="UniProtKB-UniPathway"/>
</dbReference>
<dbReference type="GO" id="GO:0019288">
    <property type="term" value="P:isopentenyl diphosphate biosynthetic process, methylerythritol 4-phosphate pathway"/>
    <property type="evidence" value="ECO:0007669"/>
    <property type="project" value="TreeGrafter"/>
</dbReference>
<dbReference type="GO" id="GO:0016114">
    <property type="term" value="P:terpenoid biosynthetic process"/>
    <property type="evidence" value="ECO:0007669"/>
    <property type="project" value="UniProtKB-UniRule"/>
</dbReference>
<dbReference type="GO" id="GO:0009228">
    <property type="term" value="P:thiamine biosynthetic process"/>
    <property type="evidence" value="ECO:0007669"/>
    <property type="project" value="UniProtKB-UniRule"/>
</dbReference>
<dbReference type="CDD" id="cd02007">
    <property type="entry name" value="TPP_DXS"/>
    <property type="match status" value="1"/>
</dbReference>
<dbReference type="CDD" id="cd07033">
    <property type="entry name" value="TPP_PYR_DXS_TK_like"/>
    <property type="match status" value="1"/>
</dbReference>
<dbReference type="FunFam" id="3.40.50.920:FF:000002">
    <property type="entry name" value="1-deoxy-D-xylulose-5-phosphate synthase"/>
    <property type="match status" value="1"/>
</dbReference>
<dbReference type="FunFam" id="3.40.50.970:FF:000005">
    <property type="entry name" value="1-deoxy-D-xylulose-5-phosphate synthase"/>
    <property type="match status" value="1"/>
</dbReference>
<dbReference type="Gene3D" id="3.40.50.920">
    <property type="match status" value="1"/>
</dbReference>
<dbReference type="Gene3D" id="3.40.50.970">
    <property type="match status" value="2"/>
</dbReference>
<dbReference type="HAMAP" id="MF_00315">
    <property type="entry name" value="DXP_synth"/>
    <property type="match status" value="1"/>
</dbReference>
<dbReference type="InterPro" id="IPR005477">
    <property type="entry name" value="Dxylulose-5-P_synthase"/>
</dbReference>
<dbReference type="InterPro" id="IPR029061">
    <property type="entry name" value="THDP-binding"/>
</dbReference>
<dbReference type="InterPro" id="IPR009014">
    <property type="entry name" value="Transketo_C/PFOR_II"/>
</dbReference>
<dbReference type="InterPro" id="IPR005475">
    <property type="entry name" value="Transketolase-like_Pyr-bd"/>
</dbReference>
<dbReference type="InterPro" id="IPR020826">
    <property type="entry name" value="Transketolase_BS"/>
</dbReference>
<dbReference type="InterPro" id="IPR033248">
    <property type="entry name" value="Transketolase_C"/>
</dbReference>
<dbReference type="InterPro" id="IPR049557">
    <property type="entry name" value="Transketolase_CS"/>
</dbReference>
<dbReference type="NCBIfam" id="TIGR00204">
    <property type="entry name" value="dxs"/>
    <property type="match status" value="1"/>
</dbReference>
<dbReference type="NCBIfam" id="NF003933">
    <property type="entry name" value="PRK05444.2-2"/>
    <property type="match status" value="1"/>
</dbReference>
<dbReference type="PANTHER" id="PTHR43322">
    <property type="entry name" value="1-D-DEOXYXYLULOSE 5-PHOSPHATE SYNTHASE-RELATED"/>
    <property type="match status" value="1"/>
</dbReference>
<dbReference type="PANTHER" id="PTHR43322:SF5">
    <property type="entry name" value="1-DEOXY-D-XYLULOSE-5-PHOSPHATE SYNTHASE, CHLOROPLASTIC"/>
    <property type="match status" value="1"/>
</dbReference>
<dbReference type="Pfam" id="PF13292">
    <property type="entry name" value="DXP_synthase_N"/>
    <property type="match status" value="1"/>
</dbReference>
<dbReference type="Pfam" id="PF02779">
    <property type="entry name" value="Transket_pyr"/>
    <property type="match status" value="1"/>
</dbReference>
<dbReference type="Pfam" id="PF02780">
    <property type="entry name" value="Transketolase_C"/>
    <property type="match status" value="1"/>
</dbReference>
<dbReference type="SMART" id="SM00861">
    <property type="entry name" value="Transket_pyr"/>
    <property type="match status" value="1"/>
</dbReference>
<dbReference type="SUPFAM" id="SSF52518">
    <property type="entry name" value="Thiamin diphosphate-binding fold (THDP-binding)"/>
    <property type="match status" value="2"/>
</dbReference>
<dbReference type="SUPFAM" id="SSF52922">
    <property type="entry name" value="TK C-terminal domain-like"/>
    <property type="match status" value="1"/>
</dbReference>
<dbReference type="PROSITE" id="PS00801">
    <property type="entry name" value="TRANSKETOLASE_1"/>
    <property type="match status" value="1"/>
</dbReference>
<dbReference type="PROSITE" id="PS00802">
    <property type="entry name" value="TRANSKETOLASE_2"/>
    <property type="match status" value="1"/>
</dbReference>
<comment type="function">
    <text evidence="1">Catalyzes the acyloin condensation reaction between C atoms 2 and 3 of pyruvate and glyceraldehyde 3-phosphate to yield 1-deoxy-D-xylulose-5-phosphate (DXP).</text>
</comment>
<comment type="catalytic activity">
    <reaction evidence="1">
        <text>D-glyceraldehyde 3-phosphate + pyruvate + H(+) = 1-deoxy-D-xylulose 5-phosphate + CO2</text>
        <dbReference type="Rhea" id="RHEA:12605"/>
        <dbReference type="ChEBI" id="CHEBI:15361"/>
        <dbReference type="ChEBI" id="CHEBI:15378"/>
        <dbReference type="ChEBI" id="CHEBI:16526"/>
        <dbReference type="ChEBI" id="CHEBI:57792"/>
        <dbReference type="ChEBI" id="CHEBI:59776"/>
        <dbReference type="EC" id="2.2.1.7"/>
    </reaction>
</comment>
<comment type="cofactor">
    <cofactor evidence="1">
        <name>Mg(2+)</name>
        <dbReference type="ChEBI" id="CHEBI:18420"/>
    </cofactor>
    <text evidence="1">Binds 1 Mg(2+) ion per subunit.</text>
</comment>
<comment type="cofactor">
    <cofactor evidence="1">
        <name>thiamine diphosphate</name>
        <dbReference type="ChEBI" id="CHEBI:58937"/>
    </cofactor>
    <text evidence="1">Binds 1 thiamine pyrophosphate per subunit.</text>
</comment>
<comment type="pathway">
    <text evidence="1">Metabolic intermediate biosynthesis; 1-deoxy-D-xylulose 5-phosphate biosynthesis; 1-deoxy-D-xylulose 5-phosphate from D-glyceraldehyde 3-phosphate and pyruvate: step 1/1.</text>
</comment>
<comment type="subunit">
    <text evidence="1">Homodimer.</text>
</comment>
<comment type="similarity">
    <text evidence="1">Belongs to the transketolase family. DXPS subfamily.</text>
</comment>
<sequence>MSFDIAKYPTLALVDSTQELRLLPKESLPKLCDELRRYLLDSVSRSSGHFASGLGTVELTVALHYVYNTPFDQLIWDVGHQAYPHKILTGRRDKIGTIRQKGGLHPFPWRGESEYDVLSVGHSSTSISAGIGIAVAAEKEGKDRRTVCVIGDGAITAGMAFEAMNHAGDIRPDMLVILNDNEMSISENVGALNNHLAQLLSGKLYSSLREGGKKVFSGVPPIKELLKRTEEHIKGMVVPGTLFEELGFNYIGPVDGHDVMGLISTLKNMRDLKGPQFLHIMTKKGRGYEPAEKDPITFHAVPKFDPSSGCLPKSSGGLPGYSKIFGDWLCETAAKDSKLMAITPAMREGSGMVEFSRKFPDRYFDVAIAEQHAVTFAAGLAIGGYKPVVAIYSTFLQRAYDQVIHDVAIQKLPVMFAIDRAGIVGADGQTHQGAFDLSYLRCIPDMVIMTPSDENECRQMLFTGYHYNDGPTAVRYPRGNAQGVALTPLEKLPIGKGLVKRHGEKLAILNFGTLMPEAAKVAEALNATLVDMRFVKPLDDTLILEMAAQHDALVTLEENAIMGGAGSGVNEVLMAHRKPVPVLNIGLPDFFIPQGTQEEARAELGLDAAGIEAKIKAWLA</sequence>
<keyword id="KW-0414">Isoprene biosynthesis</keyword>
<keyword id="KW-0460">Magnesium</keyword>
<keyword id="KW-0479">Metal-binding</keyword>
<keyword id="KW-0784">Thiamine biosynthesis</keyword>
<keyword id="KW-0786">Thiamine pyrophosphate</keyword>
<keyword id="KW-0808">Transferase</keyword>